<name>RNPA_ECO27</name>
<accession>B7UMH1</accession>
<reference key="1">
    <citation type="journal article" date="2009" name="J. Bacteriol.">
        <title>Complete genome sequence and comparative genome analysis of enteropathogenic Escherichia coli O127:H6 strain E2348/69.</title>
        <authorList>
            <person name="Iguchi A."/>
            <person name="Thomson N.R."/>
            <person name="Ogura Y."/>
            <person name="Saunders D."/>
            <person name="Ooka T."/>
            <person name="Henderson I.R."/>
            <person name="Harris D."/>
            <person name="Asadulghani M."/>
            <person name="Kurokawa K."/>
            <person name="Dean P."/>
            <person name="Kenny B."/>
            <person name="Quail M.A."/>
            <person name="Thurston S."/>
            <person name="Dougan G."/>
            <person name="Hayashi T."/>
            <person name="Parkhill J."/>
            <person name="Frankel G."/>
        </authorList>
    </citation>
    <scope>NUCLEOTIDE SEQUENCE [LARGE SCALE GENOMIC DNA]</scope>
    <source>
        <strain>E2348/69 / EPEC</strain>
    </source>
</reference>
<gene>
    <name evidence="1" type="primary">rnpA</name>
    <name type="ordered locus">E2348C_4015</name>
</gene>
<organism>
    <name type="scientific">Escherichia coli O127:H6 (strain E2348/69 / EPEC)</name>
    <dbReference type="NCBI Taxonomy" id="574521"/>
    <lineage>
        <taxon>Bacteria</taxon>
        <taxon>Pseudomonadati</taxon>
        <taxon>Pseudomonadota</taxon>
        <taxon>Gammaproteobacteria</taxon>
        <taxon>Enterobacterales</taxon>
        <taxon>Enterobacteriaceae</taxon>
        <taxon>Escherichia</taxon>
    </lineage>
</organism>
<dbReference type="EC" id="3.1.26.5" evidence="1"/>
<dbReference type="EMBL" id="FM180568">
    <property type="protein sequence ID" value="CAS11563.1"/>
    <property type="molecule type" value="Genomic_DNA"/>
</dbReference>
<dbReference type="RefSeq" id="WP_000239730.1">
    <property type="nucleotide sequence ID" value="NC_011601.1"/>
</dbReference>
<dbReference type="SMR" id="B7UMH1"/>
<dbReference type="GeneID" id="93778446"/>
<dbReference type="KEGG" id="ecg:E2348C_4015"/>
<dbReference type="HOGENOM" id="CLU_117179_11_0_6"/>
<dbReference type="Proteomes" id="UP000008205">
    <property type="component" value="Chromosome"/>
</dbReference>
<dbReference type="GO" id="GO:0030677">
    <property type="term" value="C:ribonuclease P complex"/>
    <property type="evidence" value="ECO:0007669"/>
    <property type="project" value="TreeGrafter"/>
</dbReference>
<dbReference type="GO" id="GO:0042781">
    <property type="term" value="F:3'-tRNA processing endoribonuclease activity"/>
    <property type="evidence" value="ECO:0007669"/>
    <property type="project" value="TreeGrafter"/>
</dbReference>
<dbReference type="GO" id="GO:0004526">
    <property type="term" value="F:ribonuclease P activity"/>
    <property type="evidence" value="ECO:0007669"/>
    <property type="project" value="UniProtKB-UniRule"/>
</dbReference>
<dbReference type="GO" id="GO:0000049">
    <property type="term" value="F:tRNA binding"/>
    <property type="evidence" value="ECO:0007669"/>
    <property type="project" value="UniProtKB-UniRule"/>
</dbReference>
<dbReference type="GO" id="GO:0001682">
    <property type="term" value="P:tRNA 5'-leader removal"/>
    <property type="evidence" value="ECO:0007669"/>
    <property type="project" value="UniProtKB-UniRule"/>
</dbReference>
<dbReference type="FunFam" id="3.30.230.10:FF:000016">
    <property type="entry name" value="Ribonuclease P protein component"/>
    <property type="match status" value="1"/>
</dbReference>
<dbReference type="Gene3D" id="3.30.230.10">
    <property type="match status" value="1"/>
</dbReference>
<dbReference type="HAMAP" id="MF_00227">
    <property type="entry name" value="RNase_P"/>
    <property type="match status" value="1"/>
</dbReference>
<dbReference type="InterPro" id="IPR020568">
    <property type="entry name" value="Ribosomal_Su5_D2-typ_SF"/>
</dbReference>
<dbReference type="InterPro" id="IPR014721">
    <property type="entry name" value="Ribsml_uS5_D2-typ_fold_subgr"/>
</dbReference>
<dbReference type="InterPro" id="IPR000100">
    <property type="entry name" value="RNase_P"/>
</dbReference>
<dbReference type="InterPro" id="IPR020539">
    <property type="entry name" value="RNase_P_CS"/>
</dbReference>
<dbReference type="NCBIfam" id="TIGR00188">
    <property type="entry name" value="rnpA"/>
    <property type="match status" value="1"/>
</dbReference>
<dbReference type="PANTHER" id="PTHR33992">
    <property type="entry name" value="RIBONUCLEASE P PROTEIN COMPONENT"/>
    <property type="match status" value="1"/>
</dbReference>
<dbReference type="PANTHER" id="PTHR33992:SF1">
    <property type="entry name" value="RIBONUCLEASE P PROTEIN COMPONENT"/>
    <property type="match status" value="1"/>
</dbReference>
<dbReference type="Pfam" id="PF00825">
    <property type="entry name" value="Ribonuclease_P"/>
    <property type="match status" value="1"/>
</dbReference>
<dbReference type="SUPFAM" id="SSF54211">
    <property type="entry name" value="Ribosomal protein S5 domain 2-like"/>
    <property type="match status" value="1"/>
</dbReference>
<dbReference type="PROSITE" id="PS00648">
    <property type="entry name" value="RIBONUCLEASE_P"/>
    <property type="match status" value="1"/>
</dbReference>
<protein>
    <recommendedName>
        <fullName evidence="1">Ribonuclease P protein component</fullName>
        <shortName evidence="1">RNase P protein</shortName>
        <shortName evidence="1">RNaseP protein</shortName>
        <ecNumber evidence="1">3.1.26.5</ecNumber>
    </recommendedName>
    <alternativeName>
        <fullName evidence="1">Protein C5</fullName>
    </alternativeName>
</protein>
<feature type="chain" id="PRO_1000194637" description="Ribonuclease P protein component">
    <location>
        <begin position="1"/>
        <end position="119"/>
    </location>
</feature>
<keyword id="KW-0255">Endonuclease</keyword>
<keyword id="KW-0378">Hydrolase</keyword>
<keyword id="KW-0540">Nuclease</keyword>
<keyword id="KW-1185">Reference proteome</keyword>
<keyword id="KW-0694">RNA-binding</keyword>
<keyword id="KW-0819">tRNA processing</keyword>
<sequence length="119" mass="13789">MVKLAFPRELRLLTPSQFTFVFQQPQRAGTPQITILGRLNSLGHPRIGLTVAKKNVRRAHERNRIKRLTRESFRLRQHELPAMDFVVVAKKGVADLDNRALSEALEKLWRRHCRLARGS</sequence>
<evidence type="ECO:0000255" key="1">
    <source>
        <dbReference type="HAMAP-Rule" id="MF_00227"/>
    </source>
</evidence>
<comment type="function">
    <text evidence="1">RNaseP catalyzes the removal of the 5'-leader sequence from pre-tRNA to produce the mature 5'-terminus. It can also cleave other RNA substrates such as 4.5S RNA. The protein component plays an auxiliary but essential role in vivo by binding to the 5'-leader sequence and broadening the substrate specificity of the ribozyme.</text>
</comment>
<comment type="catalytic activity">
    <reaction evidence="1">
        <text>Endonucleolytic cleavage of RNA, removing 5'-extranucleotides from tRNA precursor.</text>
        <dbReference type="EC" id="3.1.26.5"/>
    </reaction>
</comment>
<comment type="subunit">
    <text evidence="1">Consists of a catalytic RNA component (M1 or rnpB) and a protein subunit.</text>
</comment>
<comment type="similarity">
    <text evidence="1">Belongs to the RnpA family.</text>
</comment>
<proteinExistence type="inferred from homology"/>